<evidence type="ECO:0000250" key="1"/>
<evidence type="ECO:0000255" key="2">
    <source>
        <dbReference type="PROSITE-ProRule" id="PRU00214"/>
    </source>
</evidence>
<evidence type="ECO:0000305" key="3"/>
<proteinExistence type="inferred from homology"/>
<comment type="function">
    <text evidence="1">Ubiquitin exists either covalently attached to another protein, or free (unanchored). When covalently bound, it is conjugated to target proteins via an isopeptide bond either as a monomer (monoubiquitin), a polymer linked via different Lys residues of the ubiquitin (polyubiquitin chains) or a linear polymer linked via the initiator Met of the ubiquitin (linear polyubiquitin chains). Polyubiquitin chains, when attached to a target protein, have different functions depending on the Lys residue of the ubiquitin that is linked: Lys-11-linked is involved in ERAD (endoplasmic reticulum-associated degradation) and in cell-cycle regulation; Lys-29-linked is involved in lysosomal degradation; Lys-33-linked is involved in kinase modification; Lys-48-linked is involved in protein degradation via the proteasome; Lys-63-linked is involved in endocytosis, and DNA-damage responses. Linear polymer chains formed via attachment by the initiator Met lead to cell signaling. Ubiquitin is usually conjugated to Lys residues of target proteins, however, in rare cases, conjugation to Cys or Ser residues has been observed. When polyubiquitin is free (unanchored-polyubiquitin), it also has distinct roles, such as in activation of protein kinases, and in signaling (By similarity).</text>
</comment>
<comment type="subcellular location">
    <subcellularLocation>
        <location evidence="1">Cytoplasm</location>
    </subcellularLocation>
    <subcellularLocation>
        <location evidence="1">Nucleus</location>
    </subcellularLocation>
</comment>
<comment type="miscellaneous">
    <text>Ubiquitin is encoded by 16 different genes. Ubiquitin is generally synthesized as a polyubiquitin precursor with tandem head to tail repeats. Often, there is one to three additional amino acids after the last repeat, removed in the mature protein. Alternatively, ubiquitin extension protein is synthesized as a single copy of ubiquitin fused to a ribosomal protein (either eL40 or eS31) or to a ubiquitin-related protein (either RUB1 or RUB2). Following translation, extension protein is cleaved from ubiquitin.</text>
</comment>
<comment type="similarity">
    <text evidence="3">Belongs to the ubiquitin family.</text>
</comment>
<protein>
    <recommendedName>
        <fullName>Polyubiquitin 9</fullName>
    </recommendedName>
    <component>
        <recommendedName>
            <fullName>Ubiquitin-related 1</fullName>
        </recommendedName>
    </component>
    <component>
        <recommendedName>
            <fullName>Ubiquitin-related 2</fullName>
        </recommendedName>
    </component>
    <component>
        <recommendedName>
            <fullName>Ubiquitin-related 3</fullName>
        </recommendedName>
    </component>
    <component>
        <recommendedName>
            <fullName>Ubiquitin-related 4</fullName>
        </recommendedName>
    </component>
</protein>
<accession>Q9FHQ6</accession>
<reference key="1">
    <citation type="journal article" date="1999" name="DNA Res.">
        <title>Structural analysis of Arabidopsis thaliana chromosome 5. IX. Sequence features of the regions of 1,011,550 bp covered by seventeen P1 and TAC clones.</title>
        <authorList>
            <person name="Kaneko T."/>
            <person name="Katoh T."/>
            <person name="Sato S."/>
            <person name="Nakamura Y."/>
            <person name="Asamizu E."/>
            <person name="Kotani H."/>
            <person name="Miyajima N."/>
            <person name="Tabata S."/>
        </authorList>
    </citation>
    <scope>NUCLEOTIDE SEQUENCE [LARGE SCALE GENOMIC DNA]</scope>
    <source>
        <strain>cv. Columbia</strain>
    </source>
</reference>
<reference key="2">
    <citation type="journal article" date="2017" name="Plant J.">
        <title>Araport11: a complete reannotation of the Arabidopsis thaliana reference genome.</title>
        <authorList>
            <person name="Cheng C.Y."/>
            <person name="Krishnakumar V."/>
            <person name="Chan A.P."/>
            <person name="Thibaud-Nissen F."/>
            <person name="Schobel S."/>
            <person name="Town C.D."/>
        </authorList>
    </citation>
    <scope>GENOME REANNOTATION</scope>
    <source>
        <strain>cv. Columbia</strain>
    </source>
</reference>
<name>UBQ9_ARATH</name>
<keyword id="KW-0963">Cytoplasm</keyword>
<keyword id="KW-1017">Isopeptide bond</keyword>
<keyword id="KW-0539">Nucleus</keyword>
<keyword id="KW-1185">Reference proteome</keyword>
<keyword id="KW-0677">Repeat</keyword>
<keyword id="KW-0833">Ubl conjugation pathway</keyword>
<feature type="chain" id="PRO_0000396924" description="Ubiquitin-related 1">
    <location>
        <begin position="1"/>
        <end position="78"/>
    </location>
</feature>
<feature type="chain" id="PRO_0000396925" description="Ubiquitin-related 2">
    <location>
        <begin position="79"/>
        <end position="154"/>
    </location>
</feature>
<feature type="chain" id="PRO_0000396926" description="Ubiquitin-related 3">
    <location>
        <begin position="155"/>
        <end position="230"/>
    </location>
</feature>
<feature type="chain" id="PRO_0000396927" description="Ubiquitin-related 4">
    <location>
        <begin position="231"/>
        <end position="307"/>
    </location>
</feature>
<feature type="propeptide" id="PRO_0000396928" evidence="3">
    <location>
        <begin position="308"/>
        <end position="322"/>
    </location>
</feature>
<feature type="domain" description="Ubiquitin-like 1" evidence="2">
    <location>
        <begin position="3"/>
        <end position="78"/>
    </location>
</feature>
<feature type="domain" description="Ubiquitin-like 2" evidence="2">
    <location>
        <begin position="79"/>
        <end position="154"/>
    </location>
</feature>
<feature type="domain" description="Ubiquitin-like 3" evidence="2">
    <location>
        <begin position="155"/>
        <end position="230"/>
    </location>
</feature>
<feature type="domain" description="Ubiquitin-like 4" evidence="2">
    <location>
        <begin position="231"/>
        <end position="307"/>
    </location>
</feature>
<feature type="cross-link" description="Glycyl lysine isopeptide (Gly-Lys) (interchain with K-? in acceptor proteins)" evidence="2">
    <location>
        <position position="78"/>
    </location>
</feature>
<feature type="cross-link" description="Glycyl lysine isopeptide (Gly-Lys) (interchain with K-? in acceptor proteins)" evidence="2">
    <location>
        <position position="154"/>
    </location>
</feature>
<feature type="cross-link" description="Glycyl lysine isopeptide (Gly-Lys) (interchain with K-? in acceptor proteins)" evidence="2">
    <location>
        <position position="230"/>
    </location>
</feature>
<feature type="cross-link" description="Glycyl lysine isopeptide (Gly-Lys) (interchain with K-? in acceptor proteins)" evidence="2">
    <location>
        <position position="307"/>
    </location>
</feature>
<dbReference type="EMBL" id="AB018107">
    <property type="protein sequence ID" value="BAB08310.1"/>
    <property type="molecule type" value="Genomic_DNA"/>
</dbReference>
<dbReference type="EMBL" id="CP002688">
    <property type="protein sequence ID" value="AED94213.1"/>
    <property type="molecule type" value="Genomic_DNA"/>
</dbReference>
<dbReference type="PIR" id="S55244">
    <property type="entry name" value="S55244"/>
</dbReference>
<dbReference type="RefSeq" id="NP_568552.1">
    <property type="nucleotide sequence ID" value="NM_123123.1"/>
</dbReference>
<dbReference type="SMR" id="Q9FHQ6"/>
<dbReference type="BioGRID" id="18993">
    <property type="interactions" value="5"/>
</dbReference>
<dbReference type="FunCoup" id="Q9FHQ6">
    <property type="interactions" value="67"/>
</dbReference>
<dbReference type="STRING" id="3702.Q9FHQ6"/>
<dbReference type="PaxDb" id="3702-AT5G37640.1"/>
<dbReference type="EnsemblPlants" id="AT5G37640.1">
    <property type="protein sequence ID" value="AT5G37640.1"/>
    <property type="gene ID" value="AT5G37640"/>
</dbReference>
<dbReference type="GeneID" id="833742"/>
<dbReference type="Gramene" id="AT5G37640.1">
    <property type="protein sequence ID" value="AT5G37640.1"/>
    <property type="gene ID" value="AT5G37640"/>
</dbReference>
<dbReference type="KEGG" id="ath:AT5G37640"/>
<dbReference type="Araport" id="AT5G37640"/>
<dbReference type="TAIR" id="AT5G37640">
    <property type="gene designation" value="UBQ9"/>
</dbReference>
<dbReference type="eggNOG" id="KOG0001">
    <property type="taxonomic scope" value="Eukaryota"/>
</dbReference>
<dbReference type="HOGENOM" id="CLU_010412_7_0_1"/>
<dbReference type="InParanoid" id="Q9FHQ6"/>
<dbReference type="PhylomeDB" id="Q9FHQ6"/>
<dbReference type="CD-CODE" id="4299E36E">
    <property type="entry name" value="Nucleolus"/>
</dbReference>
<dbReference type="PRO" id="PR:Q9FHQ6"/>
<dbReference type="Proteomes" id="UP000006548">
    <property type="component" value="Chromosome 5"/>
</dbReference>
<dbReference type="ExpressionAtlas" id="Q9FHQ6">
    <property type="expression patterns" value="baseline and differential"/>
</dbReference>
<dbReference type="GO" id="GO:0005730">
    <property type="term" value="C:nucleolus"/>
    <property type="evidence" value="ECO:0007005"/>
    <property type="project" value="TAIR"/>
</dbReference>
<dbReference type="GO" id="GO:0009505">
    <property type="term" value="C:plant-type cell wall"/>
    <property type="evidence" value="ECO:0007005"/>
    <property type="project" value="TAIR"/>
</dbReference>
<dbReference type="GO" id="GO:0000325">
    <property type="term" value="C:plant-type vacuole"/>
    <property type="evidence" value="ECO:0007005"/>
    <property type="project" value="TAIR"/>
</dbReference>
<dbReference type="GO" id="GO:0009536">
    <property type="term" value="C:plastid"/>
    <property type="evidence" value="ECO:0007005"/>
    <property type="project" value="TAIR"/>
</dbReference>
<dbReference type="GO" id="GO:0003729">
    <property type="term" value="F:mRNA binding"/>
    <property type="evidence" value="ECO:0000314"/>
    <property type="project" value="TAIR"/>
</dbReference>
<dbReference type="GO" id="GO:0006511">
    <property type="term" value="P:ubiquitin-dependent protein catabolic process"/>
    <property type="evidence" value="ECO:0000250"/>
    <property type="project" value="TAIR"/>
</dbReference>
<dbReference type="CDD" id="cd01803">
    <property type="entry name" value="Ubl_ubiquitin"/>
    <property type="match status" value="2"/>
</dbReference>
<dbReference type="FunFam" id="3.10.20.90:FF:000011">
    <property type="entry name" value="Polyubiquitin Ubiquitin"/>
    <property type="match status" value="2"/>
</dbReference>
<dbReference type="FunFam" id="3.10.20.90:FF:000160">
    <property type="entry name" value="Polyubiquitin-C"/>
    <property type="match status" value="1"/>
</dbReference>
<dbReference type="FunFam" id="3.10.20.90:FF:000009">
    <property type="entry name" value="Ubiquitin-60S ribosomal protein"/>
    <property type="match status" value="1"/>
</dbReference>
<dbReference type="Gene3D" id="3.10.20.90">
    <property type="entry name" value="Phosphatidylinositol 3-kinase Catalytic Subunit, Chain A, domain 1"/>
    <property type="match status" value="4"/>
</dbReference>
<dbReference type="InterPro" id="IPR000626">
    <property type="entry name" value="Ubiquitin-like_dom"/>
</dbReference>
<dbReference type="InterPro" id="IPR029071">
    <property type="entry name" value="Ubiquitin-like_domsf"/>
</dbReference>
<dbReference type="InterPro" id="IPR019954">
    <property type="entry name" value="Ubiquitin_CS"/>
</dbReference>
<dbReference type="InterPro" id="IPR019956">
    <property type="entry name" value="Ubiquitin_dom"/>
</dbReference>
<dbReference type="InterPro" id="IPR050158">
    <property type="entry name" value="Ubiquitin_ubiquitin-like"/>
</dbReference>
<dbReference type="PANTHER" id="PTHR10666">
    <property type="entry name" value="UBIQUITIN"/>
    <property type="match status" value="1"/>
</dbReference>
<dbReference type="Pfam" id="PF00240">
    <property type="entry name" value="ubiquitin"/>
    <property type="match status" value="4"/>
</dbReference>
<dbReference type="PRINTS" id="PR00348">
    <property type="entry name" value="UBIQUITIN"/>
</dbReference>
<dbReference type="SMART" id="SM00213">
    <property type="entry name" value="UBQ"/>
    <property type="match status" value="4"/>
</dbReference>
<dbReference type="SUPFAM" id="SSF54236">
    <property type="entry name" value="Ubiquitin-like"/>
    <property type="match status" value="4"/>
</dbReference>
<dbReference type="PROSITE" id="PS00299">
    <property type="entry name" value="UBIQUITIN_1"/>
    <property type="match status" value="4"/>
</dbReference>
<dbReference type="PROSITE" id="PS50053">
    <property type="entry name" value="UBIQUITIN_2"/>
    <property type="match status" value="4"/>
</dbReference>
<sequence>MSMQIHAKTLTEKTITIDVVSSDTINNVKAKIQDIEGIPLDQQRLIFSGKLLDDGRTLADYSIQKDSILHLALRLRGGMQIFVKTLTGKTITLEVESSDTIDNVKAKIQDKEGVPPDQQRLIFAGKQLDDGRTLADYNIQKESTLHLVLRLRGGMQIFVRTLTRKTIALEVESSDTTDNVKAKIQDKEGIPPDQQRLIFAGKQLEDGRTLADYNIQKESTLHLVLRLCGGMQIFVNTLTGKTITLEVESSDTIDNVKAKIQDKERIQPDQQRLIFAGEQLEDGYYTLADYNIQKESTLHLVLRLRGGECFGFIFLFLLCFNS</sequence>
<gene>
    <name type="primary">UBQ9</name>
    <name type="ordered locus">At5g37640</name>
    <name type="ORF">K12B20.90</name>
</gene>
<organism>
    <name type="scientific">Arabidopsis thaliana</name>
    <name type="common">Mouse-ear cress</name>
    <dbReference type="NCBI Taxonomy" id="3702"/>
    <lineage>
        <taxon>Eukaryota</taxon>
        <taxon>Viridiplantae</taxon>
        <taxon>Streptophyta</taxon>
        <taxon>Embryophyta</taxon>
        <taxon>Tracheophyta</taxon>
        <taxon>Spermatophyta</taxon>
        <taxon>Magnoliopsida</taxon>
        <taxon>eudicotyledons</taxon>
        <taxon>Gunneridae</taxon>
        <taxon>Pentapetalae</taxon>
        <taxon>rosids</taxon>
        <taxon>malvids</taxon>
        <taxon>Brassicales</taxon>
        <taxon>Brassicaceae</taxon>
        <taxon>Camelineae</taxon>
        <taxon>Arabidopsis</taxon>
    </lineage>
</organism>